<reference key="1">
    <citation type="journal article" date="2002" name="DNA Res.">
        <title>Complete genome structure of the thermophilic cyanobacterium Thermosynechococcus elongatus BP-1.</title>
        <authorList>
            <person name="Nakamura Y."/>
            <person name="Kaneko T."/>
            <person name="Sato S."/>
            <person name="Ikeuchi M."/>
            <person name="Katoh H."/>
            <person name="Sasamoto S."/>
            <person name="Watanabe A."/>
            <person name="Iriguchi M."/>
            <person name="Kawashima K."/>
            <person name="Kimura T."/>
            <person name="Kishida Y."/>
            <person name="Kiyokawa C."/>
            <person name="Kohara M."/>
            <person name="Matsumoto M."/>
            <person name="Matsuno A."/>
            <person name="Nakazaki N."/>
            <person name="Shimpo S."/>
            <person name="Sugimoto M."/>
            <person name="Takeuchi C."/>
            <person name="Yamada M."/>
            <person name="Tabata S."/>
        </authorList>
    </citation>
    <scope>NUCLEOTIDE SEQUENCE [LARGE SCALE GENOMIC DNA]</scope>
    <source>
        <strain>NIES-2133 / IAM M-273 / BP-1</strain>
    </source>
</reference>
<comment type="function">
    <text evidence="1">NDH-1 shuttles electrons from an unknown electron donor, via FMN and iron-sulfur (Fe-S) centers, to quinones in the respiratory and/or the photosynthetic chain. The immediate electron acceptor for the enzyme in this species is believed to be plastoquinone. Couples the redox reaction to proton translocation, and thus conserves the redox energy in a proton gradient. Cyanobacterial NDH-1 also plays a role in inorganic carbon-concentration.</text>
</comment>
<comment type="catalytic activity">
    <reaction evidence="1">
        <text>a plastoquinone + NADH + (n+1) H(+)(in) = a plastoquinol + NAD(+) + n H(+)(out)</text>
        <dbReference type="Rhea" id="RHEA:42608"/>
        <dbReference type="Rhea" id="RHEA-COMP:9561"/>
        <dbReference type="Rhea" id="RHEA-COMP:9562"/>
        <dbReference type="ChEBI" id="CHEBI:15378"/>
        <dbReference type="ChEBI" id="CHEBI:17757"/>
        <dbReference type="ChEBI" id="CHEBI:57540"/>
        <dbReference type="ChEBI" id="CHEBI:57945"/>
        <dbReference type="ChEBI" id="CHEBI:62192"/>
    </reaction>
</comment>
<comment type="catalytic activity">
    <reaction evidence="1">
        <text>a plastoquinone + NADPH + (n+1) H(+)(in) = a plastoquinol + NADP(+) + n H(+)(out)</text>
        <dbReference type="Rhea" id="RHEA:42612"/>
        <dbReference type="Rhea" id="RHEA-COMP:9561"/>
        <dbReference type="Rhea" id="RHEA-COMP:9562"/>
        <dbReference type="ChEBI" id="CHEBI:15378"/>
        <dbReference type="ChEBI" id="CHEBI:17757"/>
        <dbReference type="ChEBI" id="CHEBI:57783"/>
        <dbReference type="ChEBI" id="CHEBI:58349"/>
        <dbReference type="ChEBI" id="CHEBI:62192"/>
    </reaction>
</comment>
<comment type="subunit">
    <text evidence="1">NDH-1 can be composed of about 15 different subunits; different subcomplexes with different compositions have been identified which probably have different functions.</text>
</comment>
<comment type="subcellular location">
    <subcellularLocation>
        <location evidence="1">Cellular thylakoid membrane</location>
        <topology evidence="1">Peripheral membrane protein</topology>
        <orientation evidence="1">Cytoplasmic side</orientation>
    </subcellularLocation>
</comment>
<comment type="similarity">
    <text evidence="1">Belongs to the complex I 49 kDa subunit family.</text>
</comment>
<gene>
    <name evidence="1" type="primary">ndhH</name>
    <name type="ordered locus">tlr1288</name>
</gene>
<protein>
    <recommendedName>
        <fullName evidence="1">NAD(P)H-quinone oxidoreductase subunit H</fullName>
        <ecNumber evidence="1">7.1.1.-</ecNumber>
    </recommendedName>
    <alternativeName>
        <fullName>NAD(P)H dehydrogenase subunit H</fullName>
    </alternativeName>
    <alternativeName>
        <fullName evidence="1">NADH-plastoquinone oxidoreductase subunit H</fullName>
    </alternativeName>
    <alternativeName>
        <fullName evidence="1">NDH-1 subunit H</fullName>
        <shortName evidence="1">NDH-H</shortName>
    </alternativeName>
</protein>
<keyword id="KW-0002">3D-structure</keyword>
<keyword id="KW-0472">Membrane</keyword>
<keyword id="KW-0520">NAD</keyword>
<keyword id="KW-0521">NADP</keyword>
<keyword id="KW-0618">Plastoquinone</keyword>
<keyword id="KW-0874">Quinone</keyword>
<keyword id="KW-1185">Reference proteome</keyword>
<keyword id="KW-0793">Thylakoid</keyword>
<keyword id="KW-1278">Translocase</keyword>
<keyword id="KW-0813">Transport</keyword>
<organism>
    <name type="scientific">Thermosynechococcus vestitus (strain NIES-2133 / IAM M-273 / BP-1)</name>
    <dbReference type="NCBI Taxonomy" id="197221"/>
    <lineage>
        <taxon>Bacteria</taxon>
        <taxon>Bacillati</taxon>
        <taxon>Cyanobacteriota</taxon>
        <taxon>Cyanophyceae</taxon>
        <taxon>Acaryochloridales</taxon>
        <taxon>Thermosynechococcaceae</taxon>
        <taxon>Thermosynechococcus</taxon>
    </lineage>
</organism>
<name>NDHH_THEVB</name>
<proteinExistence type="evidence at protein level"/>
<sequence length="394" mass="45216">MPKIETRTEPMVINMGPHHPSMHGVLRLMVTLDGEDVIDCEPVIGYLHRGMEKIAENRTNIMFIPYVSRWDYAAGMFNEAVTVNAPEKLAGIPVPKRASYIRVIMLELNRIANHLLWLGPFLADVGAQTPFFYIFREREYIYDLFEAATGMRFINNNYFRIGGVAADLTYGWVTKCRDFCDYFLPKVDEYERLITNNPIFVRRLQGVGKISREEAINWGLSGPMLRASGVKWDLRKVDHYECYDDFDWDVPVATEGDCLARYIVRIQEMRESVKIIRQALDGLPGGPYENLEAKRMLEGAKSEWNGFDYQYIGKKLSPTFKIPKGEHYVRVESGKGELGIYLIGDDNVFPWRWKIRPPDFNNLQVLPQLLKGMKVADIVAILGSIDVIMGSVDR</sequence>
<accession>Q8DJD9</accession>
<dbReference type="EC" id="7.1.1.-" evidence="1"/>
<dbReference type="EMBL" id="BA000039">
    <property type="protein sequence ID" value="BAC08840.1"/>
    <property type="molecule type" value="Genomic_DNA"/>
</dbReference>
<dbReference type="RefSeq" id="NP_682078.1">
    <property type="nucleotide sequence ID" value="NC_004113.1"/>
</dbReference>
<dbReference type="RefSeq" id="WP_011057128.1">
    <property type="nucleotide sequence ID" value="NC_004113.1"/>
</dbReference>
<dbReference type="PDB" id="6HUM">
    <property type="method" value="EM"/>
    <property type="resolution" value="3.34 A"/>
    <property type="chains" value="H=1-394"/>
</dbReference>
<dbReference type="PDB" id="6KHI">
    <property type="method" value="EM"/>
    <property type="resolution" value="3.00 A"/>
    <property type="chains" value="H=1-394"/>
</dbReference>
<dbReference type="PDB" id="6KHJ">
    <property type="method" value="EM"/>
    <property type="resolution" value="3.00 A"/>
    <property type="chains" value="H=1-394"/>
</dbReference>
<dbReference type="PDB" id="6L7O">
    <property type="method" value="EM"/>
    <property type="resolution" value="3.20 A"/>
    <property type="chains" value="H=1-394"/>
</dbReference>
<dbReference type="PDB" id="6L7P">
    <property type="method" value="EM"/>
    <property type="resolution" value="3.60 A"/>
    <property type="chains" value="H=1-394"/>
</dbReference>
<dbReference type="PDB" id="6NBQ">
    <property type="method" value="EM"/>
    <property type="resolution" value="3.10 A"/>
    <property type="chains" value="H=1-394"/>
</dbReference>
<dbReference type="PDB" id="6NBX">
    <property type="method" value="EM"/>
    <property type="resolution" value="3.50 A"/>
    <property type="chains" value="H=1-394"/>
</dbReference>
<dbReference type="PDB" id="6NBY">
    <property type="method" value="EM"/>
    <property type="resolution" value="3.10 A"/>
    <property type="chains" value="H=1-394"/>
</dbReference>
<dbReference type="PDB" id="6TJV">
    <property type="method" value="EM"/>
    <property type="resolution" value="3.20 A"/>
    <property type="chains" value="H=1-394"/>
</dbReference>
<dbReference type="PDBsum" id="6HUM"/>
<dbReference type="PDBsum" id="6KHI"/>
<dbReference type="PDBsum" id="6KHJ"/>
<dbReference type="PDBsum" id="6L7O"/>
<dbReference type="PDBsum" id="6L7P"/>
<dbReference type="PDBsum" id="6NBQ"/>
<dbReference type="PDBsum" id="6NBX"/>
<dbReference type="PDBsum" id="6NBY"/>
<dbReference type="PDBsum" id="6TJV"/>
<dbReference type="EMDB" id="EMD-0281"/>
<dbReference type="EMDB" id="EMD-0415"/>
<dbReference type="EMDB" id="EMD-0425"/>
<dbReference type="EMDB" id="EMD-0849"/>
<dbReference type="EMDB" id="EMD-0850"/>
<dbReference type="EMDB" id="EMD-9989"/>
<dbReference type="EMDB" id="EMD-9990"/>
<dbReference type="SMR" id="Q8DJD9"/>
<dbReference type="IntAct" id="Q8DJD9">
    <property type="interactions" value="17"/>
</dbReference>
<dbReference type="STRING" id="197221.gene:10747884"/>
<dbReference type="TCDB" id="3.D.1.8.2">
    <property type="family name" value="the h+ or na+-translocating nadh dehydrogenase (ndh) family"/>
</dbReference>
<dbReference type="EnsemblBacteria" id="BAC08840">
    <property type="protein sequence ID" value="BAC08840"/>
    <property type="gene ID" value="BAC08840"/>
</dbReference>
<dbReference type="KEGG" id="tel:tlr1288"/>
<dbReference type="PATRIC" id="fig|197221.4.peg.1355"/>
<dbReference type="eggNOG" id="COG0649">
    <property type="taxonomic scope" value="Bacteria"/>
</dbReference>
<dbReference type="Proteomes" id="UP000000440">
    <property type="component" value="Chromosome"/>
</dbReference>
<dbReference type="GO" id="GO:0031676">
    <property type="term" value="C:plasma membrane-derived thylakoid membrane"/>
    <property type="evidence" value="ECO:0007669"/>
    <property type="project" value="UniProtKB-SubCell"/>
</dbReference>
<dbReference type="GO" id="GO:0051287">
    <property type="term" value="F:NAD binding"/>
    <property type="evidence" value="ECO:0007669"/>
    <property type="project" value="InterPro"/>
</dbReference>
<dbReference type="GO" id="GO:0016655">
    <property type="term" value="F:oxidoreductase activity, acting on NAD(P)H, quinone or similar compound as acceptor"/>
    <property type="evidence" value="ECO:0007669"/>
    <property type="project" value="UniProtKB-UniRule"/>
</dbReference>
<dbReference type="GO" id="GO:0048038">
    <property type="term" value="F:quinone binding"/>
    <property type="evidence" value="ECO:0007669"/>
    <property type="project" value="UniProtKB-KW"/>
</dbReference>
<dbReference type="GO" id="GO:0019684">
    <property type="term" value="P:photosynthesis, light reaction"/>
    <property type="evidence" value="ECO:0007669"/>
    <property type="project" value="UniProtKB-UniRule"/>
</dbReference>
<dbReference type="Gene3D" id="1.10.645.10">
    <property type="entry name" value="Cytochrome-c3 Hydrogenase, chain B"/>
    <property type="match status" value="1"/>
</dbReference>
<dbReference type="HAMAP" id="MF_01358">
    <property type="entry name" value="NDH1_NuoD"/>
    <property type="match status" value="1"/>
</dbReference>
<dbReference type="InterPro" id="IPR001135">
    <property type="entry name" value="NADH_Q_OxRdtase_suD"/>
</dbReference>
<dbReference type="InterPro" id="IPR014029">
    <property type="entry name" value="NADH_UbQ_OxRdtase_49kDa_CS"/>
</dbReference>
<dbReference type="InterPro" id="IPR022885">
    <property type="entry name" value="NDH1_su_D/H"/>
</dbReference>
<dbReference type="InterPro" id="IPR029014">
    <property type="entry name" value="NiFe-Hase_large"/>
</dbReference>
<dbReference type="NCBIfam" id="TIGR01962">
    <property type="entry name" value="NuoD"/>
    <property type="match status" value="1"/>
</dbReference>
<dbReference type="NCBIfam" id="NF004739">
    <property type="entry name" value="PRK06075.1"/>
    <property type="match status" value="1"/>
</dbReference>
<dbReference type="NCBIfam" id="NF005649">
    <property type="entry name" value="PRK07415.1"/>
    <property type="match status" value="1"/>
</dbReference>
<dbReference type="PANTHER" id="PTHR11993:SF10">
    <property type="entry name" value="NADH DEHYDROGENASE [UBIQUINONE] IRON-SULFUR PROTEIN 2, MITOCHONDRIAL"/>
    <property type="match status" value="1"/>
</dbReference>
<dbReference type="PANTHER" id="PTHR11993">
    <property type="entry name" value="NADH-UBIQUINONE OXIDOREDUCTASE 49 KDA SUBUNIT"/>
    <property type="match status" value="1"/>
</dbReference>
<dbReference type="Pfam" id="PF00346">
    <property type="entry name" value="Complex1_49kDa"/>
    <property type="match status" value="1"/>
</dbReference>
<dbReference type="SUPFAM" id="SSF56762">
    <property type="entry name" value="HydB/Nqo4-like"/>
    <property type="match status" value="1"/>
</dbReference>
<dbReference type="PROSITE" id="PS00535">
    <property type="entry name" value="COMPLEX1_49K"/>
    <property type="match status" value="1"/>
</dbReference>
<evidence type="ECO:0000255" key="1">
    <source>
        <dbReference type="HAMAP-Rule" id="MF_01358"/>
    </source>
</evidence>
<evidence type="ECO:0007829" key="2">
    <source>
        <dbReference type="PDB" id="6HUM"/>
    </source>
</evidence>
<evidence type="ECO:0007829" key="3">
    <source>
        <dbReference type="PDB" id="6KHI"/>
    </source>
</evidence>
<evidence type="ECO:0007829" key="4">
    <source>
        <dbReference type="PDB" id="6KHJ"/>
    </source>
</evidence>
<evidence type="ECO:0007829" key="5">
    <source>
        <dbReference type="PDB" id="6L7O"/>
    </source>
</evidence>
<evidence type="ECO:0007829" key="6">
    <source>
        <dbReference type="PDB" id="6NBQ"/>
    </source>
</evidence>
<evidence type="ECO:0007829" key="7">
    <source>
        <dbReference type="PDB" id="6NBY"/>
    </source>
</evidence>
<feature type="chain" id="PRO_0000357945" description="NAD(P)H-quinone oxidoreductase subunit H">
    <location>
        <begin position="1"/>
        <end position="394"/>
    </location>
</feature>
<feature type="strand" evidence="3">
    <location>
        <begin position="5"/>
        <end position="9"/>
    </location>
</feature>
<feature type="strand" evidence="6">
    <location>
        <begin position="11"/>
        <end position="14"/>
    </location>
</feature>
<feature type="turn" evidence="7">
    <location>
        <begin position="16"/>
        <end position="18"/>
    </location>
</feature>
<feature type="strand" evidence="3">
    <location>
        <begin position="20"/>
        <end position="23"/>
    </location>
</feature>
<feature type="strand" evidence="3">
    <location>
        <begin position="27"/>
        <end position="30"/>
    </location>
</feature>
<feature type="strand" evidence="4">
    <location>
        <begin position="33"/>
        <end position="36"/>
    </location>
</feature>
<feature type="strand" evidence="3">
    <location>
        <begin position="40"/>
        <end position="43"/>
    </location>
</feature>
<feature type="helix" evidence="3">
    <location>
        <begin position="51"/>
        <end position="55"/>
    </location>
</feature>
<feature type="helix" evidence="3">
    <location>
        <begin position="60"/>
        <end position="63"/>
    </location>
</feature>
<feature type="turn" evidence="3">
    <location>
        <begin position="64"/>
        <end position="68"/>
    </location>
</feature>
<feature type="strand" evidence="3">
    <location>
        <begin position="69"/>
        <end position="71"/>
    </location>
</feature>
<feature type="turn" evidence="6">
    <location>
        <begin position="72"/>
        <end position="74"/>
    </location>
</feature>
<feature type="helix" evidence="3">
    <location>
        <begin position="77"/>
        <end position="90"/>
    </location>
</feature>
<feature type="helix" evidence="3">
    <location>
        <begin position="96"/>
        <end position="125"/>
    </location>
</feature>
<feature type="helix" evidence="3">
    <location>
        <begin position="131"/>
        <end position="148"/>
    </location>
</feature>
<feature type="strand" evidence="3">
    <location>
        <begin position="150"/>
        <end position="154"/>
    </location>
</feature>
<feature type="strand" evidence="3">
    <location>
        <begin position="163"/>
        <end position="166"/>
    </location>
</feature>
<feature type="helix" evidence="3">
    <location>
        <begin position="170"/>
        <end position="172"/>
    </location>
</feature>
<feature type="helix" evidence="3">
    <location>
        <begin position="173"/>
        <end position="191"/>
    </location>
</feature>
<feature type="turn" evidence="3">
    <location>
        <begin position="192"/>
        <end position="196"/>
    </location>
</feature>
<feature type="helix" evidence="3">
    <location>
        <begin position="198"/>
        <end position="204"/>
    </location>
</feature>
<feature type="strand" evidence="3">
    <location>
        <begin position="205"/>
        <end position="207"/>
    </location>
</feature>
<feature type="helix" evidence="3">
    <location>
        <begin position="212"/>
        <end position="218"/>
    </location>
</feature>
<feature type="helix" evidence="3">
    <location>
        <begin position="222"/>
        <end position="224"/>
    </location>
</feature>
<feature type="turn" evidence="3">
    <location>
        <begin position="225"/>
        <end position="229"/>
    </location>
</feature>
<feature type="turn" evidence="3">
    <location>
        <begin position="234"/>
        <end position="239"/>
    </location>
</feature>
<feature type="strand" evidence="5">
    <location>
        <begin position="240"/>
        <end position="242"/>
    </location>
</feature>
<feature type="strand" evidence="3">
    <location>
        <begin position="244"/>
        <end position="246"/>
    </location>
</feature>
<feature type="strand" evidence="5">
    <location>
        <begin position="254"/>
        <end position="257"/>
    </location>
</feature>
<feature type="helix" evidence="3">
    <location>
        <begin position="258"/>
        <end position="282"/>
    </location>
</feature>
<feature type="strand" evidence="2">
    <location>
        <begin position="284"/>
        <end position="287"/>
    </location>
</feature>
<feature type="helix" evidence="3">
    <location>
        <begin position="288"/>
        <end position="297"/>
    </location>
</feature>
<feature type="turn" evidence="3">
    <location>
        <begin position="298"/>
        <end position="300"/>
    </location>
</feature>
<feature type="strand" evidence="3">
    <location>
        <begin position="301"/>
        <end position="306"/>
    </location>
</feature>
<feature type="turn" evidence="3">
    <location>
        <begin position="307"/>
        <end position="309"/>
    </location>
</feature>
<feature type="strand" evidence="4">
    <location>
        <begin position="311"/>
        <end position="314"/>
    </location>
</feature>
<feature type="strand" evidence="7">
    <location>
        <begin position="324"/>
        <end position="326"/>
    </location>
</feature>
<feature type="strand" evidence="3">
    <location>
        <begin position="327"/>
        <end position="331"/>
    </location>
</feature>
<feature type="strand" evidence="3">
    <location>
        <begin position="334"/>
        <end position="336"/>
    </location>
</feature>
<feature type="strand" evidence="3">
    <location>
        <begin position="338"/>
        <end position="342"/>
    </location>
</feature>
<feature type="strand" evidence="3">
    <location>
        <begin position="346"/>
        <end position="349"/>
    </location>
</feature>
<feature type="strand" evidence="3">
    <location>
        <begin position="353"/>
        <end position="356"/>
    </location>
</feature>
<feature type="turn" evidence="3">
    <location>
        <begin position="358"/>
        <end position="362"/>
    </location>
</feature>
<feature type="strand" evidence="4">
    <location>
        <begin position="363"/>
        <end position="365"/>
    </location>
</feature>
<feature type="turn" evidence="3">
    <location>
        <begin position="367"/>
        <end position="369"/>
    </location>
</feature>
<feature type="strand" evidence="3">
    <location>
        <begin position="370"/>
        <end position="372"/>
    </location>
</feature>
<feature type="helix" evidence="3">
    <location>
        <begin position="377"/>
        <end position="385"/>
    </location>
</feature>
<feature type="turn" evidence="3">
    <location>
        <begin position="389"/>
        <end position="393"/>
    </location>
</feature>